<gene>
    <name type="primary">flgI</name>
    <name type="ordered locus">HP_0246</name>
</gene>
<protein>
    <recommendedName>
        <fullName>Flagellar P-ring protein</fullName>
    </recommendedName>
    <alternativeName>
        <fullName>Basal body P-ring protein</fullName>
    </alternativeName>
</protein>
<feature type="signal peptide" evidence="2">
    <location>
        <begin position="1"/>
        <end position="15"/>
    </location>
</feature>
<feature type="chain" id="PRO_0000009507" description="Flagellar P-ring protein">
    <location>
        <begin position="16"/>
        <end position="342"/>
    </location>
</feature>
<evidence type="ECO:0000250" key="1"/>
<evidence type="ECO:0000255" key="2"/>
<evidence type="ECO:0000305" key="3"/>
<sequence length="342" mass="36657">MKRVFLWLIFVLAFHKLLAEKIGDIASVVGVRDNQLIGYGLVIGLNGTGDKSGSKFTMQSISNMLESVNVKISADDIKSKNVAAVMITASLPPFARQGDKIDIHISSIGDAKSIQGGTLVMTPLNAVDGNIYALAQGAIVSGNSNNLLSANIINGATIEREVSYDLFHKNAMTLSLKNPNFKNAIQVQNTLNKVFGNKVAIALDPKTIQITRPERFSMVEFLALVQEIPINYSAKNKIIVDEKSGTIVSGVDIMVHPVVVTSQDITLKITKDPLNDSKNTQDLDNNMSLDTAHNTLSSNGKNITIAGVVKALQKIGVSAKGMVSILQALKKSGAISAEMEIL</sequence>
<keyword id="KW-0975">Bacterial flagellum</keyword>
<keyword id="KW-0574">Periplasm</keyword>
<keyword id="KW-1185">Reference proteome</keyword>
<keyword id="KW-0732">Signal</keyword>
<reference key="1">
    <citation type="journal article" date="1997" name="Nature">
        <title>The complete genome sequence of the gastric pathogen Helicobacter pylori.</title>
        <authorList>
            <person name="Tomb J.-F."/>
            <person name="White O."/>
            <person name="Kerlavage A.R."/>
            <person name="Clayton R.A."/>
            <person name="Sutton G.G."/>
            <person name="Fleischmann R.D."/>
            <person name="Ketchum K.A."/>
            <person name="Klenk H.-P."/>
            <person name="Gill S.R."/>
            <person name="Dougherty B.A."/>
            <person name="Nelson K.E."/>
            <person name="Quackenbush J."/>
            <person name="Zhou L."/>
            <person name="Kirkness E.F."/>
            <person name="Peterson S.N."/>
            <person name="Loftus B.J."/>
            <person name="Richardson D.L."/>
            <person name="Dodson R.J."/>
            <person name="Khalak H.G."/>
            <person name="Glodek A."/>
            <person name="McKenney K."/>
            <person name="FitzGerald L.M."/>
            <person name="Lee N."/>
            <person name="Adams M.D."/>
            <person name="Hickey E.K."/>
            <person name="Berg D.E."/>
            <person name="Gocayne J.D."/>
            <person name="Utterback T.R."/>
            <person name="Peterson J.D."/>
            <person name="Kelley J.M."/>
            <person name="Cotton M.D."/>
            <person name="Weidman J.F."/>
            <person name="Fujii C."/>
            <person name="Bowman C."/>
            <person name="Watthey L."/>
            <person name="Wallin E."/>
            <person name="Hayes W.S."/>
            <person name="Borodovsky M."/>
            <person name="Karp P.D."/>
            <person name="Smith H.O."/>
            <person name="Fraser C.M."/>
            <person name="Venter J.C."/>
        </authorList>
    </citation>
    <scope>NUCLEOTIDE SEQUENCE [LARGE SCALE GENOMIC DNA]</scope>
    <source>
        <strain>ATCC 700392 / 26695</strain>
    </source>
</reference>
<dbReference type="EMBL" id="AE000511">
    <property type="protein sequence ID" value="AAD07314.1"/>
    <property type="molecule type" value="Genomic_DNA"/>
</dbReference>
<dbReference type="PIR" id="F64550">
    <property type="entry name" value="F64550"/>
</dbReference>
<dbReference type="RefSeq" id="NP_207044.1">
    <property type="nucleotide sequence ID" value="NC_000915.1"/>
</dbReference>
<dbReference type="RefSeq" id="WP_000832067.1">
    <property type="nucleotide sequence ID" value="NC_018939.1"/>
</dbReference>
<dbReference type="SMR" id="O25028"/>
<dbReference type="DIP" id="DIP-3337N"/>
<dbReference type="FunCoup" id="O25028">
    <property type="interactions" value="44"/>
</dbReference>
<dbReference type="IntAct" id="O25028">
    <property type="interactions" value="1"/>
</dbReference>
<dbReference type="MINT" id="O25028"/>
<dbReference type="STRING" id="85962.HP_0246"/>
<dbReference type="PaxDb" id="85962-C694_01245"/>
<dbReference type="EnsemblBacteria" id="AAD07314">
    <property type="protein sequence ID" value="AAD07314"/>
    <property type="gene ID" value="HP_0246"/>
</dbReference>
<dbReference type="KEGG" id="heo:C694_01245"/>
<dbReference type="KEGG" id="hpy:HP_0246"/>
<dbReference type="PATRIC" id="fig|85962.47.peg.266"/>
<dbReference type="eggNOG" id="COG1706">
    <property type="taxonomic scope" value="Bacteria"/>
</dbReference>
<dbReference type="InParanoid" id="O25028"/>
<dbReference type="OrthoDB" id="9786431at2"/>
<dbReference type="PhylomeDB" id="O25028"/>
<dbReference type="Proteomes" id="UP000000429">
    <property type="component" value="Chromosome"/>
</dbReference>
<dbReference type="GO" id="GO:0009428">
    <property type="term" value="C:bacterial-type flagellum basal body, distal rod, P ring"/>
    <property type="evidence" value="ECO:0000318"/>
    <property type="project" value="GO_Central"/>
</dbReference>
<dbReference type="GO" id="GO:0030288">
    <property type="term" value="C:outer membrane-bounded periplasmic space"/>
    <property type="evidence" value="ECO:0007669"/>
    <property type="project" value="InterPro"/>
</dbReference>
<dbReference type="GO" id="GO:0005198">
    <property type="term" value="F:structural molecule activity"/>
    <property type="evidence" value="ECO:0007669"/>
    <property type="project" value="InterPro"/>
</dbReference>
<dbReference type="GO" id="GO:0071973">
    <property type="term" value="P:bacterial-type flagellum-dependent cell motility"/>
    <property type="evidence" value="ECO:0000318"/>
    <property type="project" value="GO_Central"/>
</dbReference>
<dbReference type="HAMAP" id="MF_00416">
    <property type="entry name" value="FlgI"/>
    <property type="match status" value="1"/>
</dbReference>
<dbReference type="InterPro" id="IPR001782">
    <property type="entry name" value="Flag_FlgI"/>
</dbReference>
<dbReference type="NCBIfam" id="NF003676">
    <property type="entry name" value="PRK05303.1"/>
    <property type="match status" value="1"/>
</dbReference>
<dbReference type="PANTHER" id="PTHR30381">
    <property type="entry name" value="FLAGELLAR P-RING PERIPLASMIC PROTEIN FLGI"/>
    <property type="match status" value="1"/>
</dbReference>
<dbReference type="PANTHER" id="PTHR30381:SF0">
    <property type="entry name" value="FLAGELLAR P-RING PROTEIN"/>
    <property type="match status" value="1"/>
</dbReference>
<dbReference type="Pfam" id="PF02119">
    <property type="entry name" value="FlgI"/>
    <property type="match status" value="1"/>
</dbReference>
<dbReference type="PRINTS" id="PR01010">
    <property type="entry name" value="FLGPRINGFLGI"/>
</dbReference>
<proteinExistence type="inferred from homology"/>
<name>FLGI_HELPY</name>
<comment type="function">
    <text evidence="1">Assembles around the rod to form the L-ring and probably protects the motor/basal body from shearing forces during rotation.</text>
</comment>
<comment type="subunit">
    <text evidence="1">The basal body constitutes a major portion of the flagellar organelle and consists of four rings (L,P,S, and M) mounted on a central rod.</text>
</comment>
<comment type="subcellular location">
    <subcellularLocation>
        <location evidence="1">Periplasm</location>
    </subcellularLocation>
    <subcellularLocation>
        <location evidence="1">Bacterial flagellum basal body</location>
    </subcellularLocation>
</comment>
<comment type="similarity">
    <text evidence="3">Belongs to the FlgI family.</text>
</comment>
<organism>
    <name type="scientific">Helicobacter pylori (strain ATCC 700392 / 26695)</name>
    <name type="common">Campylobacter pylori</name>
    <dbReference type="NCBI Taxonomy" id="85962"/>
    <lineage>
        <taxon>Bacteria</taxon>
        <taxon>Pseudomonadati</taxon>
        <taxon>Campylobacterota</taxon>
        <taxon>Epsilonproteobacteria</taxon>
        <taxon>Campylobacterales</taxon>
        <taxon>Helicobacteraceae</taxon>
        <taxon>Helicobacter</taxon>
    </lineage>
</organism>
<accession>O25028</accession>